<feature type="initiator methionine" description="Removed" evidence="1">
    <location>
        <position position="1"/>
    </location>
</feature>
<feature type="chain" id="PRO_0000339976" description="Photosystem II protein D1" evidence="2">
    <location>
        <begin position="2"/>
        <end position="344"/>
    </location>
</feature>
<feature type="propeptide" id="PRO_0000339977" evidence="2">
    <location>
        <begin position="345"/>
        <end position="353"/>
    </location>
</feature>
<feature type="transmembrane region" description="Helical" evidence="2">
    <location>
        <begin position="29"/>
        <end position="46"/>
    </location>
</feature>
<feature type="transmembrane region" description="Helical" evidence="2">
    <location>
        <begin position="118"/>
        <end position="133"/>
    </location>
</feature>
<feature type="transmembrane region" description="Helical" evidence="2">
    <location>
        <begin position="142"/>
        <end position="156"/>
    </location>
</feature>
<feature type="transmembrane region" description="Helical" evidence="2">
    <location>
        <begin position="197"/>
        <end position="218"/>
    </location>
</feature>
<feature type="transmembrane region" description="Helical" evidence="2">
    <location>
        <begin position="274"/>
        <end position="288"/>
    </location>
</feature>
<feature type="binding site" description="axial binding residue" evidence="2">
    <location>
        <position position="118"/>
    </location>
    <ligand>
        <name>chlorophyll a</name>
        <dbReference type="ChEBI" id="CHEBI:58416"/>
        <label>ChlzD1</label>
    </ligand>
    <ligandPart>
        <name>Mg</name>
        <dbReference type="ChEBI" id="CHEBI:25107"/>
    </ligandPart>
</feature>
<feature type="binding site" evidence="2">
    <location>
        <position position="126"/>
    </location>
    <ligand>
        <name>pheophytin a</name>
        <dbReference type="ChEBI" id="CHEBI:136840"/>
        <label>D1</label>
    </ligand>
</feature>
<feature type="binding site" evidence="2">
    <location>
        <position position="170"/>
    </location>
    <ligand>
        <name>[CaMn4O5] cluster</name>
        <dbReference type="ChEBI" id="CHEBI:189552"/>
    </ligand>
</feature>
<feature type="binding site" evidence="2">
    <location>
        <position position="189"/>
    </location>
    <ligand>
        <name>[CaMn4O5] cluster</name>
        <dbReference type="ChEBI" id="CHEBI:189552"/>
    </ligand>
</feature>
<feature type="binding site" description="axial binding residue" evidence="2">
    <location>
        <position position="198"/>
    </location>
    <ligand>
        <name>chlorophyll a</name>
        <dbReference type="ChEBI" id="CHEBI:58416"/>
        <label>PD1</label>
    </ligand>
    <ligandPart>
        <name>Mg</name>
        <dbReference type="ChEBI" id="CHEBI:25107"/>
    </ligandPart>
</feature>
<feature type="binding site" evidence="2">
    <location>
        <position position="215"/>
    </location>
    <ligand>
        <name>a quinone</name>
        <dbReference type="ChEBI" id="CHEBI:132124"/>
        <label>B</label>
    </ligand>
</feature>
<feature type="binding site" evidence="2">
    <location>
        <position position="215"/>
    </location>
    <ligand>
        <name>Fe cation</name>
        <dbReference type="ChEBI" id="CHEBI:24875"/>
        <note>ligand shared with heterodimeric partner</note>
    </ligand>
</feature>
<feature type="binding site" evidence="2">
    <location>
        <begin position="264"/>
        <end position="265"/>
    </location>
    <ligand>
        <name>a quinone</name>
        <dbReference type="ChEBI" id="CHEBI:132124"/>
        <label>B</label>
    </ligand>
</feature>
<feature type="binding site" evidence="2">
    <location>
        <position position="272"/>
    </location>
    <ligand>
        <name>Fe cation</name>
        <dbReference type="ChEBI" id="CHEBI:24875"/>
        <note>ligand shared with heterodimeric partner</note>
    </ligand>
</feature>
<feature type="binding site" evidence="2">
    <location>
        <position position="332"/>
    </location>
    <ligand>
        <name>[CaMn4O5] cluster</name>
        <dbReference type="ChEBI" id="CHEBI:189552"/>
    </ligand>
</feature>
<feature type="binding site" evidence="2">
    <location>
        <position position="333"/>
    </location>
    <ligand>
        <name>[CaMn4O5] cluster</name>
        <dbReference type="ChEBI" id="CHEBI:189552"/>
    </ligand>
</feature>
<feature type="binding site" evidence="2">
    <location>
        <position position="342"/>
    </location>
    <ligand>
        <name>[CaMn4O5] cluster</name>
        <dbReference type="ChEBI" id="CHEBI:189552"/>
    </ligand>
</feature>
<feature type="binding site" evidence="2">
    <location>
        <position position="344"/>
    </location>
    <ligand>
        <name>[CaMn4O5] cluster</name>
        <dbReference type="ChEBI" id="CHEBI:189552"/>
    </ligand>
</feature>
<feature type="site" description="Tyrosine radical intermediate" evidence="2">
    <location>
        <position position="161"/>
    </location>
</feature>
<feature type="site" description="Stabilizes free radical intermediate" evidence="2">
    <location>
        <position position="190"/>
    </location>
</feature>
<feature type="site" description="Cleavage; by CTPA" evidence="2">
    <location>
        <begin position="344"/>
        <end position="345"/>
    </location>
</feature>
<feature type="modified residue" description="N-acetylthreonine" evidence="1 2">
    <location>
        <position position="2"/>
    </location>
</feature>
<feature type="modified residue" description="Phosphothreonine" evidence="1 2">
    <location>
        <position position="2"/>
    </location>
</feature>
<proteinExistence type="inferred from homology"/>
<geneLocation type="chloroplast"/>
<name>PSBA_CRUWA</name>
<accession>A4QKR1</accession>
<gene>
    <name evidence="2" type="primary">psbA</name>
</gene>
<dbReference type="EC" id="1.10.3.9" evidence="2"/>
<dbReference type="EMBL" id="AP009372">
    <property type="protein sequence ID" value="BAF50266.1"/>
    <property type="molecule type" value="Genomic_DNA"/>
</dbReference>
<dbReference type="RefSeq" id="YP_001123442.1">
    <property type="nucleotide sequence ID" value="NC_009271.1"/>
</dbReference>
<dbReference type="SMR" id="A4QKR1"/>
<dbReference type="GeneID" id="4962725"/>
<dbReference type="GO" id="GO:0009535">
    <property type="term" value="C:chloroplast thylakoid membrane"/>
    <property type="evidence" value="ECO:0007669"/>
    <property type="project" value="UniProtKB-SubCell"/>
</dbReference>
<dbReference type="GO" id="GO:0009523">
    <property type="term" value="C:photosystem II"/>
    <property type="evidence" value="ECO:0007669"/>
    <property type="project" value="UniProtKB-KW"/>
</dbReference>
<dbReference type="GO" id="GO:0016168">
    <property type="term" value="F:chlorophyll binding"/>
    <property type="evidence" value="ECO:0007669"/>
    <property type="project" value="UniProtKB-UniRule"/>
</dbReference>
<dbReference type="GO" id="GO:0045156">
    <property type="term" value="F:electron transporter, transferring electrons within the cyclic electron transport pathway of photosynthesis activity"/>
    <property type="evidence" value="ECO:0007669"/>
    <property type="project" value="InterPro"/>
</dbReference>
<dbReference type="GO" id="GO:0005506">
    <property type="term" value="F:iron ion binding"/>
    <property type="evidence" value="ECO:0007669"/>
    <property type="project" value="UniProtKB-UniRule"/>
</dbReference>
<dbReference type="GO" id="GO:0016682">
    <property type="term" value="F:oxidoreductase activity, acting on diphenols and related substances as donors, oxygen as acceptor"/>
    <property type="evidence" value="ECO:0007669"/>
    <property type="project" value="UniProtKB-UniRule"/>
</dbReference>
<dbReference type="GO" id="GO:0010242">
    <property type="term" value="F:oxygen evolving activity"/>
    <property type="evidence" value="ECO:0007669"/>
    <property type="project" value="UniProtKB-EC"/>
</dbReference>
<dbReference type="GO" id="GO:0009772">
    <property type="term" value="P:photosynthetic electron transport in photosystem II"/>
    <property type="evidence" value="ECO:0007669"/>
    <property type="project" value="InterPro"/>
</dbReference>
<dbReference type="GO" id="GO:0009635">
    <property type="term" value="P:response to herbicide"/>
    <property type="evidence" value="ECO:0007669"/>
    <property type="project" value="UniProtKB-KW"/>
</dbReference>
<dbReference type="CDD" id="cd09289">
    <property type="entry name" value="Photosystem-II_D1"/>
    <property type="match status" value="1"/>
</dbReference>
<dbReference type="FunFam" id="1.20.85.10:FF:000002">
    <property type="entry name" value="Photosystem II protein D1"/>
    <property type="match status" value="1"/>
</dbReference>
<dbReference type="Gene3D" id="1.20.85.10">
    <property type="entry name" value="Photosystem II protein D1-like"/>
    <property type="match status" value="1"/>
</dbReference>
<dbReference type="HAMAP" id="MF_01379">
    <property type="entry name" value="PSII_PsbA_D1"/>
    <property type="match status" value="1"/>
</dbReference>
<dbReference type="InterPro" id="IPR055266">
    <property type="entry name" value="D1/D2"/>
</dbReference>
<dbReference type="InterPro" id="IPR036854">
    <property type="entry name" value="Photo_II_D1/D2_sf"/>
</dbReference>
<dbReference type="InterPro" id="IPR000484">
    <property type="entry name" value="Photo_RC_L/M"/>
</dbReference>
<dbReference type="InterPro" id="IPR055265">
    <property type="entry name" value="Photo_RC_L/M_CS"/>
</dbReference>
<dbReference type="InterPro" id="IPR005867">
    <property type="entry name" value="PSII_D1"/>
</dbReference>
<dbReference type="NCBIfam" id="TIGR01151">
    <property type="entry name" value="psbA"/>
    <property type="match status" value="1"/>
</dbReference>
<dbReference type="PANTHER" id="PTHR33149:SF12">
    <property type="entry name" value="PHOTOSYSTEM II D2 PROTEIN"/>
    <property type="match status" value="1"/>
</dbReference>
<dbReference type="PANTHER" id="PTHR33149">
    <property type="entry name" value="PHOTOSYSTEM II PROTEIN D1"/>
    <property type="match status" value="1"/>
</dbReference>
<dbReference type="Pfam" id="PF00124">
    <property type="entry name" value="Photo_RC"/>
    <property type="match status" value="1"/>
</dbReference>
<dbReference type="PRINTS" id="PR00256">
    <property type="entry name" value="REACTNCENTRE"/>
</dbReference>
<dbReference type="SUPFAM" id="SSF81483">
    <property type="entry name" value="Bacterial photosystem II reaction centre, L and M subunits"/>
    <property type="match status" value="1"/>
</dbReference>
<dbReference type="PROSITE" id="PS00244">
    <property type="entry name" value="REACTION_CENTER"/>
    <property type="match status" value="1"/>
</dbReference>
<comment type="function">
    <text evidence="2">Photosystem II (PSII) is a light-driven water:plastoquinone oxidoreductase that uses light energy to abstract electrons from H(2)O, generating O(2) and a proton gradient subsequently used for ATP formation. It consists of a core antenna complex that captures photons, and an electron transfer chain that converts photonic excitation into a charge separation. The D1/D2 (PsbA/PsbD) reaction center heterodimer binds P680, the primary electron donor of PSII as well as several subsequent electron acceptors.</text>
</comment>
<comment type="catalytic activity">
    <reaction evidence="2">
        <text>2 a plastoquinone + 4 hnu + 2 H2O = 2 a plastoquinol + O2</text>
        <dbReference type="Rhea" id="RHEA:36359"/>
        <dbReference type="Rhea" id="RHEA-COMP:9561"/>
        <dbReference type="Rhea" id="RHEA-COMP:9562"/>
        <dbReference type="ChEBI" id="CHEBI:15377"/>
        <dbReference type="ChEBI" id="CHEBI:15379"/>
        <dbReference type="ChEBI" id="CHEBI:17757"/>
        <dbReference type="ChEBI" id="CHEBI:30212"/>
        <dbReference type="ChEBI" id="CHEBI:62192"/>
        <dbReference type="EC" id="1.10.3.9"/>
    </reaction>
</comment>
<comment type="cofactor">
    <text evidence="2">The D1/D2 heterodimer binds P680, chlorophylls that are the primary electron donor of PSII, and subsequent electron acceptors. It shares a non-heme iron and each subunit binds pheophytin, quinone, additional chlorophylls, carotenoids and lipids. D1 provides most of the ligands for the Mn4-Ca-O5 cluster of the oxygen-evolving complex (OEC). There is also a Cl(-1) ion associated with D1 and D2, which is required for oxygen evolution. The PSII complex binds additional chlorophylls, carotenoids and specific lipids.</text>
</comment>
<comment type="subunit">
    <text evidence="2">PSII is composed of 1 copy each of membrane proteins PsbA, PsbB, PsbC, PsbD, PsbE, PsbF, PsbH, PsbI, PsbJ, PsbK, PsbL, PsbM, PsbT, PsbX, PsbY, PsbZ, Psb30/Ycf12, at least 3 peripheral proteins of the oxygen-evolving complex and a large number of cofactors. It forms dimeric complexes.</text>
</comment>
<comment type="subcellular location">
    <subcellularLocation>
        <location evidence="2">Plastid</location>
        <location evidence="2">Chloroplast thylakoid membrane</location>
        <topology evidence="2">Multi-pass membrane protein</topology>
    </subcellularLocation>
</comment>
<comment type="PTM">
    <text evidence="2">Tyr-161 forms a radical intermediate that is referred to as redox-active TyrZ, YZ or Y-Z.</text>
</comment>
<comment type="PTM">
    <text evidence="2">C-terminally processed by CTPA; processing is essential to allow assembly of the oxygen-evolving complex and thus photosynthetic growth.</text>
</comment>
<comment type="miscellaneous">
    <text evidence="2">2 of the reaction center chlorophylls (ChlD1 and ChlD2) are entirely coordinated by water.</text>
</comment>
<comment type="miscellaneous">
    <text evidence="2">Herbicides such as atrazine, BNT, diuron or ioxynil bind in the Q(B) binding site and block subsequent electron transfer.</text>
</comment>
<comment type="similarity">
    <text evidence="2">Belongs to the reaction center PufL/M/PsbA/D family.</text>
</comment>
<reference key="1">
    <citation type="submission" date="2007-03" db="EMBL/GenBank/DDBJ databases">
        <title>Sequencing analysis of Crucihimalaya wallichii chloroplast DNA.</title>
        <authorList>
            <person name="Hosouchi T."/>
            <person name="Tsuruoka H."/>
            <person name="Kotani H."/>
        </authorList>
    </citation>
    <scope>NUCLEOTIDE SEQUENCE [LARGE SCALE GENOMIC DNA]</scope>
</reference>
<organism>
    <name type="scientific">Crucihimalaya wallichii</name>
    <name type="common">Rock-cress</name>
    <name type="synonym">Arabidopsis campestris</name>
    <dbReference type="NCBI Taxonomy" id="78192"/>
    <lineage>
        <taxon>Eukaryota</taxon>
        <taxon>Viridiplantae</taxon>
        <taxon>Streptophyta</taxon>
        <taxon>Embryophyta</taxon>
        <taxon>Tracheophyta</taxon>
        <taxon>Spermatophyta</taxon>
        <taxon>Magnoliopsida</taxon>
        <taxon>eudicotyledons</taxon>
        <taxon>Gunneridae</taxon>
        <taxon>Pentapetalae</taxon>
        <taxon>rosids</taxon>
        <taxon>malvids</taxon>
        <taxon>Brassicales</taxon>
        <taxon>Brassicaceae</taxon>
        <taxon>Crucihimalayeae</taxon>
        <taxon>Crucihimalaya</taxon>
    </lineage>
</organism>
<keyword id="KW-0007">Acetylation</keyword>
<keyword id="KW-0106">Calcium</keyword>
<keyword id="KW-0148">Chlorophyll</keyword>
<keyword id="KW-0150">Chloroplast</keyword>
<keyword id="KW-0157">Chromophore</keyword>
<keyword id="KW-0249">Electron transport</keyword>
<keyword id="KW-0359">Herbicide resistance</keyword>
<keyword id="KW-0408">Iron</keyword>
<keyword id="KW-0460">Magnesium</keyword>
<keyword id="KW-0464">Manganese</keyword>
<keyword id="KW-0472">Membrane</keyword>
<keyword id="KW-0479">Metal-binding</keyword>
<keyword id="KW-0560">Oxidoreductase</keyword>
<keyword id="KW-0597">Phosphoprotein</keyword>
<keyword id="KW-0602">Photosynthesis</keyword>
<keyword id="KW-0604">Photosystem II</keyword>
<keyword id="KW-0934">Plastid</keyword>
<keyword id="KW-0793">Thylakoid</keyword>
<keyword id="KW-0812">Transmembrane</keyword>
<keyword id="KW-1133">Transmembrane helix</keyword>
<keyword id="KW-0813">Transport</keyword>
<evidence type="ECO:0000250" key="1">
    <source>
        <dbReference type="UniProtKB" id="P83755"/>
    </source>
</evidence>
<evidence type="ECO:0000255" key="2">
    <source>
        <dbReference type="HAMAP-Rule" id="MF_01379"/>
    </source>
</evidence>
<sequence>MTAILERRESESLWGRFCNWITSTENRLYIGWFGVLMIPTLLTATSVFIIAFIAAPPVDIDGIREPVSGSLLYGNNIISGAIIPTSAAIGLHFYPIWEAASVDEWLYNGGPYELIVLHFLLGVACYMGREWELSFRLGMRPWIAVAYSAPVAAATAVFLIYPIGQGSFSDGMPLGISGTFNFMIVFQAEHNILMHPFHMLGVAGVFGGSLFSAMHGSLVTSSLIRETTENESANEGYRFGQEEETYNIVAAHGYFGRLIFQYASFNNSRSLHFFLAAWPVVGIWFTALGISTMAFNLNGFNFNQSVVDSQGRVINTWADIINRANLGMEVMHERNAHNFPLDLAAVEAPSTNG</sequence>
<protein>
    <recommendedName>
        <fullName evidence="2">Photosystem II protein D1</fullName>
        <shortName evidence="2">PSII D1 protein</shortName>
        <ecNumber evidence="2">1.10.3.9</ecNumber>
    </recommendedName>
    <alternativeName>
        <fullName evidence="2">Photosystem II Q(B) protein</fullName>
    </alternativeName>
</protein>